<reference key="1">
    <citation type="journal article" date="2006" name="Proc. Natl. Acad. Sci. U.S.A.">
        <title>Burkholderia xenovorans LB400 harbors a multi-replicon, 9.73-Mbp genome shaped for versatility.</title>
        <authorList>
            <person name="Chain P.S.G."/>
            <person name="Denef V.J."/>
            <person name="Konstantinidis K.T."/>
            <person name="Vergez L.M."/>
            <person name="Agullo L."/>
            <person name="Reyes V.L."/>
            <person name="Hauser L."/>
            <person name="Cordova M."/>
            <person name="Gomez L."/>
            <person name="Gonzalez M."/>
            <person name="Land M."/>
            <person name="Lao V."/>
            <person name="Larimer F."/>
            <person name="LiPuma J.J."/>
            <person name="Mahenthiralingam E."/>
            <person name="Malfatti S.A."/>
            <person name="Marx C.J."/>
            <person name="Parnell J.J."/>
            <person name="Ramette A."/>
            <person name="Richardson P."/>
            <person name="Seeger M."/>
            <person name="Smith D."/>
            <person name="Spilker T."/>
            <person name="Sul W.J."/>
            <person name="Tsoi T.V."/>
            <person name="Ulrich L.E."/>
            <person name="Zhulin I.B."/>
            <person name="Tiedje J.M."/>
        </authorList>
    </citation>
    <scope>NUCLEOTIDE SEQUENCE [LARGE SCALE GENOMIC DNA]</scope>
    <source>
        <strain>LB400</strain>
    </source>
</reference>
<keyword id="KW-0997">Cell inner membrane</keyword>
<keyword id="KW-1003">Cell membrane</keyword>
<keyword id="KW-0143">Chaperone</keyword>
<keyword id="KW-0472">Membrane</keyword>
<keyword id="KW-0653">Protein transport</keyword>
<keyword id="KW-1185">Reference proteome</keyword>
<keyword id="KW-0812">Transmembrane</keyword>
<keyword id="KW-1133">Transmembrane helix</keyword>
<keyword id="KW-0813">Transport</keyword>
<accession>Q13SH4</accession>
<protein>
    <recommendedName>
        <fullName evidence="1">Membrane protein insertase YidC</fullName>
    </recommendedName>
    <alternativeName>
        <fullName evidence="1">Foldase YidC</fullName>
    </alternativeName>
    <alternativeName>
        <fullName evidence="1">Membrane integrase YidC</fullName>
    </alternativeName>
    <alternativeName>
        <fullName evidence="1">Membrane protein YidC</fullName>
    </alternativeName>
</protein>
<gene>
    <name evidence="1" type="primary">yidC</name>
    <name type="ordered locus">Bxeno_A4427</name>
    <name type="ORF">Bxe_A4466</name>
</gene>
<sequence>MDIKRTVLWVIFFMSAVMLFDNWQRDHGRPSMFFPSATPTRTVGSAAPGTTTPGTQPADLPATNAAAPGNAPAATQSQLIKFNTDVYSGEIDTRGGTLSKLSLVKQGDGKQPDLVITLFDRTANHTYLARTGLLGGDFPNHNDIYTPLPNQPHDLTGDEKSFQISFESPVKGGVKVIKTYTFTRGSYVIGVDTKIQNVGTTPVSPSVYMELVRDDQPVETPRFSHTFIGPAVYTDQHHFQKMTFGDIDKNKQDYATSADNGWIAMVQHYFASAWIPQQGAKRDIYVEKIDPALYRVGVKEPVPTIAPGQTVDVSARLFAGPEEERMLEGIAPGLELVKDYGWVTIIAKPLFWLLEKIHSYVGNWGWSIVLLTLLIKAVFFPLSAASYKSMARMKAITPRMQALRERFKGDPQKMNSALMELYKTEKVNPFGGCLPVVIQIPVFISLYWVLLSSVEMRGAPWILWIHDLSQQDPFFILPVLMAVSMFLQTKLNPTPPDPVQAKMMMFMPIAFSVMFFFFPAGLVLYYVVNNVLSIAQQYYITRMMGQAKTKAA</sequence>
<organism>
    <name type="scientific">Paraburkholderia xenovorans (strain LB400)</name>
    <dbReference type="NCBI Taxonomy" id="266265"/>
    <lineage>
        <taxon>Bacteria</taxon>
        <taxon>Pseudomonadati</taxon>
        <taxon>Pseudomonadota</taxon>
        <taxon>Betaproteobacteria</taxon>
        <taxon>Burkholderiales</taxon>
        <taxon>Burkholderiaceae</taxon>
        <taxon>Paraburkholderia</taxon>
    </lineage>
</organism>
<comment type="function">
    <text evidence="1">Required for the insertion and/or proper folding and/or complex formation of integral membrane proteins into the membrane. Involved in integration of membrane proteins that insert both dependently and independently of the Sec translocase complex, as well as at least some lipoproteins. Aids folding of multispanning membrane proteins.</text>
</comment>
<comment type="subunit">
    <text evidence="1">Interacts with the Sec translocase complex via SecD. Specifically interacts with transmembrane segments of nascent integral membrane proteins during membrane integration.</text>
</comment>
<comment type="subcellular location">
    <subcellularLocation>
        <location evidence="1">Cell inner membrane</location>
        <topology evidence="1">Multi-pass membrane protein</topology>
    </subcellularLocation>
</comment>
<comment type="similarity">
    <text evidence="1">Belongs to the OXA1/ALB3/YidC family. Type 1 subfamily.</text>
</comment>
<dbReference type="EMBL" id="CP000270">
    <property type="protein sequence ID" value="ABE32965.1"/>
    <property type="molecule type" value="Genomic_DNA"/>
</dbReference>
<dbReference type="RefSeq" id="WP_011490357.1">
    <property type="nucleotide sequence ID" value="NC_007951.1"/>
</dbReference>
<dbReference type="SMR" id="Q13SH4"/>
<dbReference type="STRING" id="266265.Bxe_A4466"/>
<dbReference type="KEGG" id="bxb:DR64_2137"/>
<dbReference type="KEGG" id="bxe:Bxe_A4466"/>
<dbReference type="PATRIC" id="fig|266265.5.peg.4656"/>
<dbReference type="eggNOG" id="COG0706">
    <property type="taxonomic scope" value="Bacteria"/>
</dbReference>
<dbReference type="OrthoDB" id="9780552at2"/>
<dbReference type="Proteomes" id="UP000001817">
    <property type="component" value="Chromosome 1"/>
</dbReference>
<dbReference type="GO" id="GO:0005886">
    <property type="term" value="C:plasma membrane"/>
    <property type="evidence" value="ECO:0007669"/>
    <property type="project" value="UniProtKB-SubCell"/>
</dbReference>
<dbReference type="GO" id="GO:0032977">
    <property type="term" value="F:membrane insertase activity"/>
    <property type="evidence" value="ECO:0007669"/>
    <property type="project" value="InterPro"/>
</dbReference>
<dbReference type="GO" id="GO:0051205">
    <property type="term" value="P:protein insertion into membrane"/>
    <property type="evidence" value="ECO:0007669"/>
    <property type="project" value="TreeGrafter"/>
</dbReference>
<dbReference type="GO" id="GO:0015031">
    <property type="term" value="P:protein transport"/>
    <property type="evidence" value="ECO:0007669"/>
    <property type="project" value="UniProtKB-KW"/>
</dbReference>
<dbReference type="CDD" id="cd20070">
    <property type="entry name" value="5TM_YidC_Alb3"/>
    <property type="match status" value="1"/>
</dbReference>
<dbReference type="CDD" id="cd19961">
    <property type="entry name" value="EcYidC-like_peri"/>
    <property type="match status" value="1"/>
</dbReference>
<dbReference type="Gene3D" id="2.70.98.90">
    <property type="match status" value="1"/>
</dbReference>
<dbReference type="HAMAP" id="MF_01810">
    <property type="entry name" value="YidC_type1"/>
    <property type="match status" value="1"/>
</dbReference>
<dbReference type="InterPro" id="IPR019998">
    <property type="entry name" value="Membr_insert_YidC"/>
</dbReference>
<dbReference type="InterPro" id="IPR028053">
    <property type="entry name" value="Membr_insert_YidC_N"/>
</dbReference>
<dbReference type="InterPro" id="IPR001708">
    <property type="entry name" value="YidC/ALB3/OXA1/COX18"/>
</dbReference>
<dbReference type="InterPro" id="IPR028055">
    <property type="entry name" value="YidC/Oxa/ALB_C"/>
</dbReference>
<dbReference type="InterPro" id="IPR047196">
    <property type="entry name" value="YidC_ALB_C"/>
</dbReference>
<dbReference type="InterPro" id="IPR038221">
    <property type="entry name" value="YidC_periplasmic_sf"/>
</dbReference>
<dbReference type="NCBIfam" id="NF002352">
    <property type="entry name" value="PRK01318.1-3"/>
    <property type="match status" value="1"/>
</dbReference>
<dbReference type="NCBIfam" id="TIGR03593">
    <property type="entry name" value="yidC_nterm"/>
    <property type="match status" value="1"/>
</dbReference>
<dbReference type="NCBIfam" id="TIGR03592">
    <property type="entry name" value="yidC_oxa1_cterm"/>
    <property type="match status" value="1"/>
</dbReference>
<dbReference type="PANTHER" id="PTHR12428:SF65">
    <property type="entry name" value="CYTOCHROME C OXIDASE ASSEMBLY PROTEIN COX18, MITOCHONDRIAL"/>
    <property type="match status" value="1"/>
</dbReference>
<dbReference type="PANTHER" id="PTHR12428">
    <property type="entry name" value="OXA1"/>
    <property type="match status" value="1"/>
</dbReference>
<dbReference type="Pfam" id="PF02096">
    <property type="entry name" value="60KD_IMP"/>
    <property type="match status" value="1"/>
</dbReference>
<dbReference type="Pfam" id="PF14849">
    <property type="entry name" value="YidC_periplas"/>
    <property type="match status" value="1"/>
</dbReference>
<dbReference type="PRINTS" id="PR00701">
    <property type="entry name" value="60KDINNERMP"/>
</dbReference>
<dbReference type="PRINTS" id="PR01900">
    <property type="entry name" value="YIDCPROTEIN"/>
</dbReference>
<name>YIDC_PARXL</name>
<proteinExistence type="inferred from homology"/>
<feature type="chain" id="PRO_1000070078" description="Membrane protein insertase YidC">
    <location>
        <begin position="1"/>
        <end position="552"/>
    </location>
</feature>
<feature type="transmembrane region" description="Helical" evidence="1">
    <location>
        <begin position="3"/>
        <end position="23"/>
    </location>
</feature>
<feature type="transmembrane region" description="Helical" evidence="1">
    <location>
        <begin position="364"/>
        <end position="384"/>
    </location>
</feature>
<feature type="transmembrane region" description="Helical" evidence="1">
    <location>
        <begin position="430"/>
        <end position="450"/>
    </location>
</feature>
<feature type="transmembrane region" description="Helical" evidence="1">
    <location>
        <begin position="504"/>
        <end position="524"/>
    </location>
</feature>
<feature type="region of interest" description="Disordered" evidence="2">
    <location>
        <begin position="36"/>
        <end position="59"/>
    </location>
</feature>
<feature type="compositionally biased region" description="Low complexity" evidence="2">
    <location>
        <begin position="42"/>
        <end position="59"/>
    </location>
</feature>
<evidence type="ECO:0000255" key="1">
    <source>
        <dbReference type="HAMAP-Rule" id="MF_01810"/>
    </source>
</evidence>
<evidence type="ECO:0000256" key="2">
    <source>
        <dbReference type="SAM" id="MobiDB-lite"/>
    </source>
</evidence>